<accession>Q9KXR3</accession>
<keyword id="KW-0378">Hydrolase</keyword>
<keyword id="KW-0479">Metal-binding</keyword>
<keyword id="KW-0665">Pyrimidine biosynthesis</keyword>
<keyword id="KW-1185">Reference proteome</keyword>
<keyword id="KW-0862">Zinc</keyword>
<comment type="function">
    <text evidence="1">Catalyzes the reversible cyclization of carbamoyl aspartate to dihydroorotate.</text>
</comment>
<comment type="catalytic activity">
    <reaction evidence="1">
        <text>(S)-dihydroorotate + H2O = N-carbamoyl-L-aspartate + H(+)</text>
        <dbReference type="Rhea" id="RHEA:24296"/>
        <dbReference type="ChEBI" id="CHEBI:15377"/>
        <dbReference type="ChEBI" id="CHEBI:15378"/>
        <dbReference type="ChEBI" id="CHEBI:30864"/>
        <dbReference type="ChEBI" id="CHEBI:32814"/>
        <dbReference type="EC" id="3.5.2.3"/>
    </reaction>
</comment>
<comment type="cofactor">
    <cofactor evidence="1">
        <name>Zn(2+)</name>
        <dbReference type="ChEBI" id="CHEBI:29105"/>
    </cofactor>
    <text evidence="1">Binds 2 Zn(2+) ions per subunit.</text>
</comment>
<comment type="pathway">
    <text evidence="1">Pyrimidine metabolism; UMP biosynthesis via de novo pathway; (S)-dihydroorotate from bicarbonate: step 3/3.</text>
</comment>
<comment type="similarity">
    <text evidence="1">Belongs to the metallo-dependent hydrolases superfamily. DHOase family. Class I DHOase subfamily.</text>
</comment>
<sequence>MSKTLIRGAKVLGGEPQDVLIDGTVVEAVGTNLSAEGAEVVEADGKVLLPGLVDLHTHLREPGREDSETVLTGTRAAASGGYTNVFAMANTFPVADTAGVVEQVWRLGQESGYCDVQPIGAVTVGLEGAKLAELGAMHESAAGVTVFSDDGKCVHDAVIMRRALEYVKAFNGVVAQHAQEPRLTEGAQMNEGVVSAELGLGGWPAVAEESVIARDVLLAEHVGSRVHICHLSTAGSVEIVRWAKSRGIDVTAEVTPHHLLLTDELVRSYNPVYKVNPPLRTERDVMALREALADGTIDIVATDHAPHPHEDKDCEWAAAAMGMVGLETALSVVQETMVDTGLLDWAGVADRMSFKPAKIGQATGHGRPVSAGEPANLTLVDAAYRGQVDPAGFASRSRNTPYEGRELPGRVTHTWLRGKATLVDGKLT</sequence>
<dbReference type="EC" id="3.5.2.3" evidence="1"/>
<dbReference type="EMBL" id="AL939109">
    <property type="protein sequence ID" value="CAB93366.1"/>
    <property type="molecule type" value="Genomic_DNA"/>
</dbReference>
<dbReference type="RefSeq" id="NP_625766.1">
    <property type="nucleotide sequence ID" value="NC_003888.3"/>
</dbReference>
<dbReference type="RefSeq" id="WP_003977340.1">
    <property type="nucleotide sequence ID" value="NZ_VNID01000021.1"/>
</dbReference>
<dbReference type="SMR" id="Q9KXR3"/>
<dbReference type="FunCoup" id="Q9KXR3">
    <property type="interactions" value="285"/>
</dbReference>
<dbReference type="STRING" id="100226.gene:17759072"/>
<dbReference type="PaxDb" id="100226-SCO1486"/>
<dbReference type="KEGG" id="sco:SCO1486"/>
<dbReference type="PATRIC" id="fig|100226.15.peg.1495"/>
<dbReference type="eggNOG" id="COG0044">
    <property type="taxonomic scope" value="Bacteria"/>
</dbReference>
<dbReference type="HOGENOM" id="CLU_015572_1_0_11"/>
<dbReference type="InParanoid" id="Q9KXR3"/>
<dbReference type="OrthoDB" id="9803027at2"/>
<dbReference type="PhylomeDB" id="Q9KXR3"/>
<dbReference type="UniPathway" id="UPA00070">
    <property type="reaction ID" value="UER00117"/>
</dbReference>
<dbReference type="Proteomes" id="UP000001973">
    <property type="component" value="Chromosome"/>
</dbReference>
<dbReference type="GO" id="GO:0005737">
    <property type="term" value="C:cytoplasm"/>
    <property type="evidence" value="ECO:0000318"/>
    <property type="project" value="GO_Central"/>
</dbReference>
<dbReference type="GO" id="GO:0004038">
    <property type="term" value="F:allantoinase activity"/>
    <property type="evidence" value="ECO:0000318"/>
    <property type="project" value="GO_Central"/>
</dbReference>
<dbReference type="GO" id="GO:0004151">
    <property type="term" value="F:dihydroorotase activity"/>
    <property type="evidence" value="ECO:0007669"/>
    <property type="project" value="UniProtKB-UniRule"/>
</dbReference>
<dbReference type="GO" id="GO:0008270">
    <property type="term" value="F:zinc ion binding"/>
    <property type="evidence" value="ECO:0007669"/>
    <property type="project" value="UniProtKB-UniRule"/>
</dbReference>
<dbReference type="GO" id="GO:0044205">
    <property type="term" value="P:'de novo' UMP biosynthetic process"/>
    <property type="evidence" value="ECO:0007669"/>
    <property type="project" value="UniProtKB-UniRule"/>
</dbReference>
<dbReference type="GO" id="GO:0006145">
    <property type="term" value="P:purine nucleobase catabolic process"/>
    <property type="evidence" value="ECO:0000318"/>
    <property type="project" value="GO_Central"/>
</dbReference>
<dbReference type="CDD" id="cd01317">
    <property type="entry name" value="DHOase_IIa"/>
    <property type="match status" value="1"/>
</dbReference>
<dbReference type="Gene3D" id="3.20.20.140">
    <property type="entry name" value="Metal-dependent hydrolases"/>
    <property type="match status" value="1"/>
</dbReference>
<dbReference type="Gene3D" id="2.30.40.10">
    <property type="entry name" value="Urease, subunit C, domain 1"/>
    <property type="match status" value="1"/>
</dbReference>
<dbReference type="HAMAP" id="MF_00220_B">
    <property type="entry name" value="PyrC_classI_B"/>
    <property type="match status" value="1"/>
</dbReference>
<dbReference type="InterPro" id="IPR006680">
    <property type="entry name" value="Amidohydro-rel"/>
</dbReference>
<dbReference type="InterPro" id="IPR004722">
    <property type="entry name" value="DHOase"/>
</dbReference>
<dbReference type="InterPro" id="IPR050138">
    <property type="entry name" value="DHOase/Allantoinase_Hydrolase"/>
</dbReference>
<dbReference type="InterPro" id="IPR002195">
    <property type="entry name" value="Dihydroorotase_CS"/>
</dbReference>
<dbReference type="InterPro" id="IPR011059">
    <property type="entry name" value="Metal-dep_hydrolase_composite"/>
</dbReference>
<dbReference type="InterPro" id="IPR032466">
    <property type="entry name" value="Metal_Hydrolase"/>
</dbReference>
<dbReference type="NCBIfam" id="NF006836">
    <property type="entry name" value="PRK09357.1-1"/>
    <property type="match status" value="1"/>
</dbReference>
<dbReference type="NCBIfam" id="TIGR00857">
    <property type="entry name" value="pyrC_multi"/>
    <property type="match status" value="1"/>
</dbReference>
<dbReference type="PANTHER" id="PTHR43668">
    <property type="entry name" value="ALLANTOINASE"/>
    <property type="match status" value="1"/>
</dbReference>
<dbReference type="PANTHER" id="PTHR43668:SF2">
    <property type="entry name" value="ALLANTOINASE"/>
    <property type="match status" value="1"/>
</dbReference>
<dbReference type="Pfam" id="PF01979">
    <property type="entry name" value="Amidohydro_1"/>
    <property type="match status" value="1"/>
</dbReference>
<dbReference type="SUPFAM" id="SSF51338">
    <property type="entry name" value="Composite domain of metallo-dependent hydrolases"/>
    <property type="match status" value="1"/>
</dbReference>
<dbReference type="SUPFAM" id="SSF51556">
    <property type="entry name" value="Metallo-dependent hydrolases"/>
    <property type="match status" value="1"/>
</dbReference>
<dbReference type="PROSITE" id="PS00483">
    <property type="entry name" value="DIHYDROOROTASE_2"/>
    <property type="match status" value="1"/>
</dbReference>
<gene>
    <name evidence="1" type="primary">pyrC</name>
    <name type="ordered locus">SCO1486</name>
    <name type="ORF">SC9C5.10c</name>
</gene>
<protein>
    <recommendedName>
        <fullName evidence="1">Dihydroorotase</fullName>
        <shortName evidence="1">DHOase</shortName>
        <ecNumber evidence="1">3.5.2.3</ecNumber>
    </recommendedName>
</protein>
<name>PYRC_STRCO</name>
<organism>
    <name type="scientific">Streptomyces coelicolor (strain ATCC BAA-471 / A3(2) / M145)</name>
    <dbReference type="NCBI Taxonomy" id="100226"/>
    <lineage>
        <taxon>Bacteria</taxon>
        <taxon>Bacillati</taxon>
        <taxon>Actinomycetota</taxon>
        <taxon>Actinomycetes</taxon>
        <taxon>Kitasatosporales</taxon>
        <taxon>Streptomycetaceae</taxon>
        <taxon>Streptomyces</taxon>
        <taxon>Streptomyces albidoflavus group</taxon>
    </lineage>
</organism>
<proteinExistence type="inferred from homology"/>
<reference key="1">
    <citation type="journal article" date="2002" name="Nature">
        <title>Complete genome sequence of the model actinomycete Streptomyces coelicolor A3(2).</title>
        <authorList>
            <person name="Bentley S.D."/>
            <person name="Chater K.F."/>
            <person name="Cerdeno-Tarraga A.-M."/>
            <person name="Challis G.L."/>
            <person name="Thomson N.R."/>
            <person name="James K.D."/>
            <person name="Harris D.E."/>
            <person name="Quail M.A."/>
            <person name="Kieser H."/>
            <person name="Harper D."/>
            <person name="Bateman A."/>
            <person name="Brown S."/>
            <person name="Chandra G."/>
            <person name="Chen C.W."/>
            <person name="Collins M."/>
            <person name="Cronin A."/>
            <person name="Fraser A."/>
            <person name="Goble A."/>
            <person name="Hidalgo J."/>
            <person name="Hornsby T."/>
            <person name="Howarth S."/>
            <person name="Huang C.-H."/>
            <person name="Kieser T."/>
            <person name="Larke L."/>
            <person name="Murphy L.D."/>
            <person name="Oliver K."/>
            <person name="O'Neil S."/>
            <person name="Rabbinowitsch E."/>
            <person name="Rajandream M.A."/>
            <person name="Rutherford K.M."/>
            <person name="Rutter S."/>
            <person name="Seeger K."/>
            <person name="Saunders D."/>
            <person name="Sharp S."/>
            <person name="Squares R."/>
            <person name="Squares S."/>
            <person name="Taylor K."/>
            <person name="Warren T."/>
            <person name="Wietzorrek A."/>
            <person name="Woodward J.R."/>
            <person name="Barrell B.G."/>
            <person name="Parkhill J."/>
            <person name="Hopwood D.A."/>
        </authorList>
    </citation>
    <scope>NUCLEOTIDE SEQUENCE [LARGE SCALE GENOMIC DNA]</scope>
    <source>
        <strain>ATCC BAA-471 / A3(2) / M145</strain>
    </source>
</reference>
<evidence type="ECO:0000255" key="1">
    <source>
        <dbReference type="HAMAP-Rule" id="MF_00220"/>
    </source>
</evidence>
<feature type="chain" id="PRO_0000147254" description="Dihydroorotase">
    <location>
        <begin position="1"/>
        <end position="428"/>
    </location>
</feature>
<feature type="active site" evidence="1">
    <location>
        <position position="303"/>
    </location>
</feature>
<feature type="binding site" evidence="1">
    <location>
        <position position="56"/>
    </location>
    <ligand>
        <name>Zn(2+)</name>
        <dbReference type="ChEBI" id="CHEBI:29105"/>
        <label>1</label>
    </ligand>
</feature>
<feature type="binding site" evidence="1">
    <location>
        <begin position="58"/>
        <end position="60"/>
    </location>
    <ligand>
        <name>substrate</name>
    </ligand>
</feature>
<feature type="binding site" evidence="1">
    <location>
        <position position="58"/>
    </location>
    <ligand>
        <name>Zn(2+)</name>
        <dbReference type="ChEBI" id="CHEBI:29105"/>
        <label>1</label>
    </ligand>
</feature>
<feature type="binding site" evidence="1">
    <location>
        <position position="90"/>
    </location>
    <ligand>
        <name>substrate</name>
    </ligand>
</feature>
<feature type="binding site" evidence="1">
    <location>
        <position position="150"/>
    </location>
    <ligand>
        <name>Zn(2+)</name>
        <dbReference type="ChEBI" id="CHEBI:29105"/>
        <label>1</label>
    </ligand>
</feature>
<feature type="binding site" evidence="1">
    <location>
        <position position="150"/>
    </location>
    <ligand>
        <name>Zn(2+)</name>
        <dbReference type="ChEBI" id="CHEBI:29105"/>
        <label>2</label>
    </ligand>
</feature>
<feature type="binding site" evidence="1">
    <location>
        <position position="177"/>
    </location>
    <ligand>
        <name>Zn(2+)</name>
        <dbReference type="ChEBI" id="CHEBI:29105"/>
        <label>2</label>
    </ligand>
</feature>
<feature type="binding site" evidence="1">
    <location>
        <position position="230"/>
    </location>
    <ligand>
        <name>Zn(2+)</name>
        <dbReference type="ChEBI" id="CHEBI:29105"/>
        <label>2</label>
    </ligand>
</feature>
<feature type="binding site" evidence="1">
    <location>
        <position position="276"/>
    </location>
    <ligand>
        <name>substrate</name>
    </ligand>
</feature>
<feature type="binding site" evidence="1">
    <location>
        <position position="303"/>
    </location>
    <ligand>
        <name>Zn(2+)</name>
        <dbReference type="ChEBI" id="CHEBI:29105"/>
        <label>1</label>
    </ligand>
</feature>
<feature type="binding site" evidence="1">
    <location>
        <position position="307"/>
    </location>
    <ligand>
        <name>substrate</name>
    </ligand>
</feature>